<gene>
    <name evidence="1" type="primary">arnF</name>
    <name type="ordered locus">EcSMS35_2414</name>
</gene>
<proteinExistence type="inferred from homology"/>
<keyword id="KW-0997">Cell inner membrane</keyword>
<keyword id="KW-1003">Cell membrane</keyword>
<keyword id="KW-0441">Lipid A biosynthesis</keyword>
<keyword id="KW-0444">Lipid biosynthesis</keyword>
<keyword id="KW-0443">Lipid metabolism</keyword>
<keyword id="KW-0448">Lipopolysaccharide biosynthesis</keyword>
<keyword id="KW-0472">Membrane</keyword>
<keyword id="KW-0812">Transmembrane</keyword>
<keyword id="KW-1133">Transmembrane helix</keyword>
<keyword id="KW-0813">Transport</keyword>
<feature type="chain" id="PRO_1000128663" description="Probable 4-amino-4-deoxy-L-arabinose-phosphoundecaprenol flippase subunit ArnF">
    <location>
        <begin position="1"/>
        <end position="128"/>
    </location>
</feature>
<feature type="topological domain" description="Cytoplasmic" evidence="1">
    <location>
        <begin position="1"/>
        <end position="2"/>
    </location>
</feature>
<feature type="transmembrane region" description="Helical" evidence="1">
    <location>
        <begin position="3"/>
        <end position="23"/>
    </location>
</feature>
<feature type="topological domain" description="Periplasmic" evidence="1">
    <location>
        <begin position="24"/>
        <end position="35"/>
    </location>
</feature>
<feature type="transmembrane region" description="Helical" evidence="1">
    <location>
        <begin position="36"/>
        <end position="56"/>
    </location>
</feature>
<feature type="topological domain" description="Cytoplasmic" evidence="1">
    <location>
        <begin position="57"/>
        <end position="76"/>
    </location>
</feature>
<feature type="transmembrane region" description="Helical" evidence="1">
    <location>
        <begin position="77"/>
        <end position="97"/>
    </location>
</feature>
<feature type="topological domain" description="Periplasmic" evidence="1">
    <location>
        <begin position="98"/>
        <end position="100"/>
    </location>
</feature>
<feature type="transmembrane region" description="Helical" evidence="1">
    <location>
        <begin position="101"/>
        <end position="121"/>
    </location>
</feature>
<feature type="topological domain" description="Cytoplasmic" evidence="1">
    <location>
        <begin position="122"/>
        <end position="128"/>
    </location>
</feature>
<evidence type="ECO:0000255" key="1">
    <source>
        <dbReference type="HAMAP-Rule" id="MF_00538"/>
    </source>
</evidence>
<reference key="1">
    <citation type="journal article" date="2008" name="J. Bacteriol.">
        <title>Insights into the environmental resistance gene pool from the genome sequence of the multidrug-resistant environmental isolate Escherichia coli SMS-3-5.</title>
        <authorList>
            <person name="Fricke W.F."/>
            <person name="Wright M.S."/>
            <person name="Lindell A.H."/>
            <person name="Harkins D.M."/>
            <person name="Baker-Austin C."/>
            <person name="Ravel J."/>
            <person name="Stepanauskas R."/>
        </authorList>
    </citation>
    <scope>NUCLEOTIDE SEQUENCE [LARGE SCALE GENOMIC DNA]</scope>
    <source>
        <strain>SMS-3-5 / SECEC</strain>
    </source>
</reference>
<protein>
    <recommendedName>
        <fullName evidence="1">Probable 4-amino-4-deoxy-L-arabinose-phosphoundecaprenol flippase subunit ArnF</fullName>
        <shortName evidence="1">L-Ara4N-phosphoundecaprenol flippase subunit ArnF</shortName>
    </recommendedName>
    <alternativeName>
        <fullName evidence="1">Undecaprenyl phosphate-aminoarabinose flippase subunit ArnF</fullName>
    </alternativeName>
</protein>
<organism>
    <name type="scientific">Escherichia coli (strain SMS-3-5 / SECEC)</name>
    <dbReference type="NCBI Taxonomy" id="439855"/>
    <lineage>
        <taxon>Bacteria</taxon>
        <taxon>Pseudomonadati</taxon>
        <taxon>Pseudomonadota</taxon>
        <taxon>Gammaproteobacteria</taxon>
        <taxon>Enterobacterales</taxon>
        <taxon>Enterobacteriaceae</taxon>
        <taxon>Escherichia</taxon>
    </lineage>
</organism>
<dbReference type="EMBL" id="CP000970">
    <property type="protein sequence ID" value="ACB15665.1"/>
    <property type="molecule type" value="Genomic_DNA"/>
</dbReference>
<dbReference type="RefSeq" id="WP_000523864.1">
    <property type="nucleotide sequence ID" value="NC_010498.1"/>
</dbReference>
<dbReference type="KEGG" id="ecm:EcSMS35_2414"/>
<dbReference type="HOGENOM" id="CLU_131462_1_0_6"/>
<dbReference type="UniPathway" id="UPA00030"/>
<dbReference type="Proteomes" id="UP000007011">
    <property type="component" value="Chromosome"/>
</dbReference>
<dbReference type="GO" id="GO:0005886">
    <property type="term" value="C:plasma membrane"/>
    <property type="evidence" value="ECO:0007669"/>
    <property type="project" value="UniProtKB-SubCell"/>
</dbReference>
<dbReference type="GO" id="GO:1901505">
    <property type="term" value="F:carbohydrate derivative transmembrane transporter activity"/>
    <property type="evidence" value="ECO:0007669"/>
    <property type="project" value="InterPro"/>
</dbReference>
<dbReference type="GO" id="GO:0009245">
    <property type="term" value="P:lipid A biosynthetic process"/>
    <property type="evidence" value="ECO:0007669"/>
    <property type="project" value="UniProtKB-UniRule"/>
</dbReference>
<dbReference type="GO" id="GO:0009103">
    <property type="term" value="P:lipopolysaccharide biosynthetic process"/>
    <property type="evidence" value="ECO:0007669"/>
    <property type="project" value="UniProtKB-UniRule"/>
</dbReference>
<dbReference type="FunFam" id="1.10.3730.20:FF:000003">
    <property type="entry name" value="Probable 4-amino-4-deoxy-L-arabinose-phosphoundecaprenol flippase subunit ArnF"/>
    <property type="match status" value="1"/>
</dbReference>
<dbReference type="Gene3D" id="1.10.3730.20">
    <property type="match status" value="1"/>
</dbReference>
<dbReference type="HAMAP" id="MF_00538">
    <property type="entry name" value="Flippase_ArnF"/>
    <property type="match status" value="1"/>
</dbReference>
<dbReference type="InterPro" id="IPR022832">
    <property type="entry name" value="Flippase_ArnF"/>
</dbReference>
<dbReference type="InterPro" id="IPR000390">
    <property type="entry name" value="Small_drug/metabolite_transptr"/>
</dbReference>
<dbReference type="NCBIfam" id="NF002816">
    <property type="entry name" value="PRK02971.1-2"/>
    <property type="match status" value="1"/>
</dbReference>
<dbReference type="PANTHER" id="PTHR30561:SF9">
    <property type="entry name" value="4-AMINO-4-DEOXY-L-ARABINOSE-PHOSPHOUNDECAPRENOL FLIPPASE SUBUNIT ARNF-RELATED"/>
    <property type="match status" value="1"/>
</dbReference>
<dbReference type="PANTHER" id="PTHR30561">
    <property type="entry name" value="SMR FAMILY PROTON-DEPENDENT DRUG EFFLUX TRANSPORTER SUGE"/>
    <property type="match status" value="1"/>
</dbReference>
<dbReference type="SUPFAM" id="SSF103481">
    <property type="entry name" value="Multidrug resistance efflux transporter EmrE"/>
    <property type="match status" value="1"/>
</dbReference>
<name>ARNF_ECOSM</name>
<sequence length="128" mass="14057">MGLMWGLFSVIIASAAQLSLGFAASHLPPMTHLWDFIAALLAFGLDARILLLGLLGYLLSVFCWYKTLHKLALSKAYALLSMSYVLVWIASMVLPGWEGTFSLKALLGVACIMSGLMLIFLPTTKQRY</sequence>
<accession>B1LLL3</accession>
<comment type="function">
    <text evidence="1">Translocates 4-amino-4-deoxy-L-arabinose-phosphoundecaprenol (alpha-L-Ara4N-phosphoundecaprenol) from the cytoplasmic to the periplasmic side of the inner membrane.</text>
</comment>
<comment type="pathway">
    <text evidence="1">Bacterial outer membrane biogenesis; lipopolysaccharide biosynthesis.</text>
</comment>
<comment type="subunit">
    <text evidence="1">Heterodimer of ArnE and ArnF.</text>
</comment>
<comment type="subcellular location">
    <subcellularLocation>
        <location evidence="1">Cell inner membrane</location>
        <topology evidence="1">Multi-pass membrane protein</topology>
    </subcellularLocation>
</comment>
<comment type="similarity">
    <text evidence="1">Belongs to the ArnF family.</text>
</comment>